<name>RGD3_YEAST</name>
<dbReference type="EMBL" id="U00028">
    <property type="protein sequence ID" value="AAB68453.1"/>
    <property type="molecule type" value="Genomic_DNA"/>
</dbReference>
<dbReference type="EMBL" id="BK006934">
    <property type="protein sequence ID" value="DAA06874.1"/>
    <property type="molecule type" value="Genomic_DNA"/>
</dbReference>
<dbReference type="PIR" id="S46672">
    <property type="entry name" value="S46672"/>
</dbReference>
<dbReference type="RefSeq" id="NP_012052.1">
    <property type="nucleotide sequence ID" value="NM_001179313.1"/>
</dbReference>
<dbReference type="SMR" id="P38870"/>
<dbReference type="BioGRID" id="36615">
    <property type="interactions" value="68"/>
</dbReference>
<dbReference type="DIP" id="DIP-2718N"/>
<dbReference type="FunCoup" id="P38870">
    <property type="interactions" value="61"/>
</dbReference>
<dbReference type="IntAct" id="P38870">
    <property type="interactions" value="4"/>
</dbReference>
<dbReference type="MINT" id="P38870"/>
<dbReference type="STRING" id="4932.YHR182W"/>
<dbReference type="iPTMnet" id="P38870"/>
<dbReference type="PaxDb" id="4932-YHR182W"/>
<dbReference type="PeptideAtlas" id="P38870"/>
<dbReference type="EnsemblFungi" id="YHR182W_mRNA">
    <property type="protein sequence ID" value="YHR182W"/>
    <property type="gene ID" value="YHR182W"/>
</dbReference>
<dbReference type="GeneID" id="856588"/>
<dbReference type="KEGG" id="sce:YHR182W"/>
<dbReference type="AGR" id="SGD:S000001225"/>
<dbReference type="SGD" id="S000001225">
    <property type="gene designation" value="RGD3"/>
</dbReference>
<dbReference type="VEuPathDB" id="FungiDB:YHR182W"/>
<dbReference type="eggNOG" id="ENOG502R1XI">
    <property type="taxonomic scope" value="Eukaryota"/>
</dbReference>
<dbReference type="HOGENOM" id="CLU_356837_0_0_1"/>
<dbReference type="InParanoid" id="P38870"/>
<dbReference type="OMA" id="TFWSEDY"/>
<dbReference type="OrthoDB" id="2155291at2759"/>
<dbReference type="BioCyc" id="YEAST:G3O-31213-MONOMER"/>
<dbReference type="Reactome" id="R-SCE-9013148">
    <property type="pathway name" value="CDC42 GTPase cycle"/>
</dbReference>
<dbReference type="Reactome" id="R-SCE-9013405">
    <property type="pathway name" value="RHOD GTPase cycle"/>
</dbReference>
<dbReference type="Reactome" id="R-SCE-9013424">
    <property type="pathway name" value="RHOV GTPase cycle"/>
</dbReference>
<dbReference type="Reactome" id="R-SCE-9035034">
    <property type="pathway name" value="RHOF GTPase cycle"/>
</dbReference>
<dbReference type="BioGRID-ORCS" id="856588">
    <property type="hits" value="0 hits in 10 CRISPR screens"/>
</dbReference>
<dbReference type="PRO" id="PR:P38870"/>
<dbReference type="Proteomes" id="UP000002311">
    <property type="component" value="Chromosome VIII"/>
</dbReference>
<dbReference type="RNAct" id="P38870">
    <property type="molecule type" value="protein"/>
</dbReference>
<dbReference type="GO" id="GO:0005938">
    <property type="term" value="C:cell cortex"/>
    <property type="evidence" value="ECO:0000318"/>
    <property type="project" value="GO_Central"/>
</dbReference>
<dbReference type="GO" id="GO:0032153">
    <property type="term" value="C:cell division site"/>
    <property type="evidence" value="ECO:0000318"/>
    <property type="project" value="GO_Central"/>
</dbReference>
<dbReference type="GO" id="GO:0051286">
    <property type="term" value="C:cell tip"/>
    <property type="evidence" value="ECO:0000318"/>
    <property type="project" value="GO_Central"/>
</dbReference>
<dbReference type="GO" id="GO:0005933">
    <property type="term" value="C:cellular bud"/>
    <property type="evidence" value="ECO:0000318"/>
    <property type="project" value="GO_Central"/>
</dbReference>
<dbReference type="GO" id="GO:0005935">
    <property type="term" value="C:cellular bud neck"/>
    <property type="evidence" value="ECO:0007669"/>
    <property type="project" value="UniProtKB-SubCell"/>
</dbReference>
<dbReference type="GO" id="GO:0005934">
    <property type="term" value="C:cellular bud tip"/>
    <property type="evidence" value="ECO:0007005"/>
    <property type="project" value="SGD"/>
</dbReference>
<dbReference type="GO" id="GO:0005737">
    <property type="term" value="C:cytoplasm"/>
    <property type="evidence" value="ECO:0007005"/>
    <property type="project" value="SGD"/>
</dbReference>
<dbReference type="GO" id="GO:0030659">
    <property type="term" value="C:cytoplasmic vesicle membrane"/>
    <property type="evidence" value="ECO:0000314"/>
    <property type="project" value="SGD"/>
</dbReference>
<dbReference type="GO" id="GO:0005886">
    <property type="term" value="C:plasma membrane"/>
    <property type="evidence" value="ECO:0000314"/>
    <property type="project" value="SGD"/>
</dbReference>
<dbReference type="GO" id="GO:0030427">
    <property type="term" value="C:site of polarized growth"/>
    <property type="evidence" value="ECO:0000318"/>
    <property type="project" value="GO_Central"/>
</dbReference>
<dbReference type="GO" id="GO:0005096">
    <property type="term" value="F:GTPase activator activity"/>
    <property type="evidence" value="ECO:0000314"/>
    <property type="project" value="SGD"/>
</dbReference>
<dbReference type="GO" id="GO:0030010">
    <property type="term" value="P:establishment of cell polarity"/>
    <property type="evidence" value="ECO:0000318"/>
    <property type="project" value="GO_Central"/>
</dbReference>
<dbReference type="GO" id="GO:0007163">
    <property type="term" value="P:establishment or maintenance of cell polarity"/>
    <property type="evidence" value="ECO:0000315"/>
    <property type="project" value="SGD"/>
</dbReference>
<dbReference type="GO" id="GO:0031106">
    <property type="term" value="P:septin ring organization"/>
    <property type="evidence" value="ECO:0000318"/>
    <property type="project" value="GO_Central"/>
</dbReference>
<dbReference type="GO" id="GO:0007264">
    <property type="term" value="P:small GTPase-mediated signal transduction"/>
    <property type="evidence" value="ECO:0000318"/>
    <property type="project" value="GO_Central"/>
</dbReference>
<dbReference type="Gene3D" id="1.10.555.10">
    <property type="entry name" value="Rho GTPase activation protein"/>
    <property type="match status" value="1"/>
</dbReference>
<dbReference type="InterPro" id="IPR008936">
    <property type="entry name" value="Rho_GTPase_activation_prot"/>
</dbReference>
<dbReference type="InterPro" id="IPR000198">
    <property type="entry name" value="RhoGAP_dom"/>
</dbReference>
<dbReference type="Pfam" id="PF00620">
    <property type="entry name" value="RhoGAP"/>
    <property type="match status" value="1"/>
</dbReference>
<dbReference type="SMART" id="SM00324">
    <property type="entry name" value="RhoGAP"/>
    <property type="match status" value="1"/>
</dbReference>
<dbReference type="SUPFAM" id="SSF48350">
    <property type="entry name" value="GTPase activation domain, GAP"/>
    <property type="match status" value="1"/>
</dbReference>
<dbReference type="PROSITE" id="PS50238">
    <property type="entry name" value="RHOGAP"/>
    <property type="match status" value="1"/>
</dbReference>
<feature type="initiator methionine" description="Removed" evidence="9">
    <location>
        <position position="1"/>
    </location>
</feature>
<feature type="chain" id="PRO_0000202935" description="Rho-GTPase-activating protein RGD3">
    <location>
        <begin position="2"/>
        <end position="785"/>
    </location>
</feature>
<feature type="domain" description="F-BAR" evidence="2">
    <location>
        <begin position="31"/>
        <end position="463"/>
    </location>
</feature>
<feature type="domain" description="Rho-GAP" evidence="1">
    <location>
        <begin position="520"/>
        <end position="702"/>
    </location>
</feature>
<feature type="region of interest" description="Disordered" evidence="3">
    <location>
        <begin position="313"/>
        <end position="340"/>
    </location>
</feature>
<feature type="region of interest" description="Disordered" evidence="3">
    <location>
        <begin position="732"/>
        <end position="785"/>
    </location>
</feature>
<feature type="compositionally biased region" description="Basic and acidic residues" evidence="3">
    <location>
        <begin position="329"/>
        <end position="339"/>
    </location>
</feature>
<feature type="site" description="Arginine finger; crucial for GTP hydrolysis by stabilizing the transition state" evidence="1">
    <location>
        <position position="559"/>
    </location>
</feature>
<feature type="modified residue" description="N-acetylserine" evidence="9">
    <location>
        <position position="2"/>
    </location>
</feature>
<feature type="modified residue" description="Phosphoserine" evidence="8">
    <location>
        <position position="759"/>
    </location>
</feature>
<feature type="modified residue" description="Phosphothreonine" evidence="8">
    <location>
        <position position="760"/>
    </location>
</feature>
<feature type="modified residue" description="Phosphothreonine" evidence="8">
    <location>
        <position position="762"/>
    </location>
</feature>
<feature type="modified residue" description="Phosphothreonine" evidence="8">
    <location>
        <position position="763"/>
    </location>
</feature>
<feature type="mutagenesis site" description="Mimics C-terminal unphosphorylated form and leads to activity and polarized localization." evidence="6">
    <original>STPTT</original>
    <variation>AAPAA</variation>
    <location>
        <begin position="759"/>
        <end position="763"/>
    </location>
</feature>
<feature type="mutagenesis site" description="Mimics C-terminal phosphorylated form and inactivity and blocks polarized localization." evidence="6">
    <original>STPTT</original>
    <variation>DEPEE</variation>
    <location>
        <begin position="759"/>
        <end position="763"/>
    </location>
</feature>
<accession>P38870</accession>
<accession>D3DLD0</accession>
<organism>
    <name type="scientific">Saccharomyces cerevisiae (strain ATCC 204508 / S288c)</name>
    <name type="common">Baker's yeast</name>
    <dbReference type="NCBI Taxonomy" id="559292"/>
    <lineage>
        <taxon>Eukaryota</taxon>
        <taxon>Fungi</taxon>
        <taxon>Dikarya</taxon>
        <taxon>Ascomycota</taxon>
        <taxon>Saccharomycotina</taxon>
        <taxon>Saccharomycetes</taxon>
        <taxon>Saccharomycetales</taxon>
        <taxon>Saccharomycetaceae</taxon>
        <taxon>Saccharomyces</taxon>
    </lineage>
</organism>
<gene>
    <name evidence="7" type="primary">RGD3</name>
    <name type="ordered locus">YHR182W</name>
</gene>
<comment type="function">
    <text evidence="6">GTPase activating protein (GAP) for RHO3 and CDC42 that binds membranes through phosphatidylinositol 4,5-bisphosphate (PubMed:32941095). Plays a key role in cell polarity (PubMed:32941095). Modulates the RHO3 distribution at the plasma membrane and its polarity during growth (PubMed:32941095).</text>
</comment>
<comment type="interaction">
    <interactant intactId="EBI-24848">
        <id>P38870</id>
    </interactant>
    <interactant intactId="EBI-22980">
        <id>P43603</id>
        <label>LSB3</label>
    </interactant>
    <organismsDiffer>false</organismsDiffer>
    <experiments>2</experiments>
</comment>
<comment type="subcellular location">
    <subcellularLocation>
        <location evidence="6">Cytoplasmic vesicle membrane</location>
        <topology evidence="6">Peripheral membrane protein</topology>
    </subcellularLocation>
    <subcellularLocation>
        <location evidence="6">Cell membrane</location>
        <topology evidence="6">Peripheral membrane protein</topology>
    </subcellularLocation>
    <subcellularLocation>
        <location evidence="6">Bud tip</location>
    </subcellularLocation>
    <subcellularLocation>
        <location evidence="5 6">Bud neck</location>
    </subcellularLocation>
    <text evidence="5 6">Relocalizes from bud neck to cytoplasm upon DNA replication stress (PubMed:22842922). Localizes to dynamic polarized vesicles that, while distinct from constitutive secretory vesicles, are dependent on actin and MYO2 function (PubMed:32941095).</text>
</comment>
<comment type="PTM">
    <text evidence="6">Phosphorylation at the C-terminus negatively regulates the activity and the polarized localization.</text>
</comment>
<comment type="miscellaneous">
    <text evidence="4">Present with 1720 molecules/cell in log phase SD medium.</text>
</comment>
<reference key="1">
    <citation type="journal article" date="1994" name="Science">
        <title>Complete nucleotide sequence of Saccharomyces cerevisiae chromosome VIII.</title>
        <authorList>
            <person name="Johnston M."/>
            <person name="Andrews S."/>
            <person name="Brinkman R."/>
            <person name="Cooper J."/>
            <person name="Ding H."/>
            <person name="Dover J."/>
            <person name="Du Z."/>
            <person name="Favello A."/>
            <person name="Fulton L."/>
            <person name="Gattung S."/>
            <person name="Geisel C."/>
            <person name="Kirsten J."/>
            <person name="Kucaba T."/>
            <person name="Hillier L.W."/>
            <person name="Jier M."/>
            <person name="Johnston L."/>
            <person name="Langston Y."/>
            <person name="Latreille P."/>
            <person name="Louis E.J."/>
            <person name="Macri C."/>
            <person name="Mardis E."/>
            <person name="Menezes S."/>
            <person name="Mouser L."/>
            <person name="Nhan M."/>
            <person name="Rifkin L."/>
            <person name="Riles L."/>
            <person name="St Peter H."/>
            <person name="Trevaskis E."/>
            <person name="Vaughan K."/>
            <person name="Vignati D."/>
            <person name="Wilcox L."/>
            <person name="Wohldman P."/>
            <person name="Waterston R."/>
            <person name="Wilson R."/>
            <person name="Vaudin M."/>
        </authorList>
    </citation>
    <scope>NUCLEOTIDE SEQUENCE [LARGE SCALE GENOMIC DNA]</scope>
    <source>
        <strain>ATCC 204508 / S288c</strain>
    </source>
</reference>
<reference key="2">
    <citation type="journal article" date="2014" name="G3 (Bethesda)">
        <title>The reference genome sequence of Saccharomyces cerevisiae: Then and now.</title>
        <authorList>
            <person name="Engel S.R."/>
            <person name="Dietrich F.S."/>
            <person name="Fisk D.G."/>
            <person name="Binkley G."/>
            <person name="Balakrishnan R."/>
            <person name="Costanzo M.C."/>
            <person name="Dwight S.S."/>
            <person name="Hitz B.C."/>
            <person name="Karra K."/>
            <person name="Nash R.S."/>
            <person name="Weng S."/>
            <person name="Wong E.D."/>
            <person name="Lloyd P."/>
            <person name="Skrzypek M.S."/>
            <person name="Miyasato S.R."/>
            <person name="Simison M."/>
            <person name="Cherry J.M."/>
        </authorList>
    </citation>
    <scope>GENOME REANNOTATION</scope>
    <source>
        <strain>ATCC 204508 / S288c</strain>
    </source>
</reference>
<reference key="3">
    <citation type="journal article" date="2003" name="Nature">
        <title>Global analysis of protein expression in yeast.</title>
        <authorList>
            <person name="Ghaemmaghami S."/>
            <person name="Huh W.-K."/>
            <person name="Bower K."/>
            <person name="Howson R.W."/>
            <person name="Belle A."/>
            <person name="Dephoure N."/>
            <person name="O'Shea E.K."/>
            <person name="Weissman J.S."/>
        </authorList>
    </citation>
    <scope>LEVEL OF PROTEIN EXPRESSION [LARGE SCALE ANALYSIS]</scope>
</reference>
<reference key="4">
    <citation type="journal article" date="2012" name="Nat. Cell Biol.">
        <title>Dissecting DNA damage response pathways by analysing protein localization and abundance changes during DNA replication stress.</title>
        <authorList>
            <person name="Tkach J.M."/>
            <person name="Yimit A."/>
            <person name="Lee A.Y."/>
            <person name="Riffle M."/>
            <person name="Costanzo M."/>
            <person name="Jaschob D."/>
            <person name="Hendry J.A."/>
            <person name="Ou J."/>
            <person name="Moffat J."/>
            <person name="Boone C."/>
            <person name="Davis T.N."/>
            <person name="Nislow C."/>
            <person name="Brown G.W."/>
        </authorList>
    </citation>
    <scope>SUBCELLULAR LOCATION</scope>
</reference>
<reference key="5">
    <citation type="journal article" date="2012" name="Proc. Natl. Acad. Sci. U.S.A.">
        <title>N-terminal acetylome analyses and functional insights of the N-terminal acetyltransferase NatB.</title>
        <authorList>
            <person name="Van Damme P."/>
            <person name="Lasa M."/>
            <person name="Polevoda B."/>
            <person name="Gazquez C."/>
            <person name="Elosegui-Artola A."/>
            <person name="Kim D.S."/>
            <person name="De Juan-Pardo E."/>
            <person name="Demeyer K."/>
            <person name="Hole K."/>
            <person name="Larrea E."/>
            <person name="Timmerman E."/>
            <person name="Prieto J."/>
            <person name="Arnesen T."/>
            <person name="Sherman F."/>
            <person name="Gevaert K."/>
            <person name="Aldabe R."/>
        </authorList>
    </citation>
    <scope>ACETYLATION [LARGE SCALE ANALYSIS] AT SER-2</scope>
    <scope>CLEAVAGE OF INITIATOR METHIONINE [LARGE SCALE ANALYSIS]</scope>
    <scope>IDENTIFICATION BY MASS SPECTROMETRY [LARGE SCALE ANALYSIS]</scope>
</reference>
<reference key="6">
    <citation type="journal article" date="2020" name="Mol. Biol. Cell">
        <title>Yeast Rgd3 is a phospho-regulated F-BAR-containing RhoGAP involved in the regulation of Rho3 distribution and cell morphology.</title>
        <authorList>
            <person name="Gingras R.M."/>
            <person name="Lwin K.M."/>
            <person name="Miller A.M."/>
            <person name="Bretscher A."/>
        </authorList>
    </citation>
    <scope>FUNCTION</scope>
    <scope>SUBCELLULAR LOCATION</scope>
    <scope>PHOSPHORYLATION AT SER-759; THR-760; THR-762 AND THR-763</scope>
    <scope>MUTAGENESIS OF 759-SER--THR-763</scope>
</reference>
<evidence type="ECO:0000255" key="1">
    <source>
        <dbReference type="PROSITE-ProRule" id="PRU00172"/>
    </source>
</evidence>
<evidence type="ECO:0000255" key="2">
    <source>
        <dbReference type="PROSITE-ProRule" id="PRU01077"/>
    </source>
</evidence>
<evidence type="ECO:0000256" key="3">
    <source>
        <dbReference type="SAM" id="MobiDB-lite"/>
    </source>
</evidence>
<evidence type="ECO:0000269" key="4">
    <source>
    </source>
</evidence>
<evidence type="ECO:0000269" key="5">
    <source>
    </source>
</evidence>
<evidence type="ECO:0000269" key="6">
    <source>
    </source>
</evidence>
<evidence type="ECO:0000303" key="7">
    <source>
    </source>
</evidence>
<evidence type="ECO:0000305" key="8">
    <source>
    </source>
</evidence>
<evidence type="ECO:0007744" key="9">
    <source>
    </source>
</evidence>
<protein>
    <recommendedName>
        <fullName evidence="7">Rho-GTPase-activating protein RGD3</fullName>
    </recommendedName>
</protein>
<keyword id="KW-0007">Acetylation</keyword>
<keyword id="KW-1003">Cell membrane</keyword>
<keyword id="KW-0968">Cytoplasmic vesicle</keyword>
<keyword id="KW-0343">GTPase activation</keyword>
<keyword id="KW-0472">Membrane</keyword>
<keyword id="KW-0597">Phosphoprotein</keyword>
<keyword id="KW-1185">Reference proteome</keyword>
<sequence>MSVKEHNEEDIIGDELQNSRQLSIDCDSVKISLRNTYWTKDYTTGIKLFIKHMKRENDLLIKDIKFYNDFVNKFWKPTLNNLQKMEATNSMNSRLLEVMSKQFNIISTEQVERDCKIPLQELRDLNESFLREAENDLSSRYSAYIKDLVAAKEALIGCEKRVQSIYKLKKANTPVENSSSVFDNGKDSAPLTRLNFVCEFPYTLDERLKFEDCDQFMSFLQTLKGKVILEKSVFSVPGLSNQSFQGRSLIKELKKLEPRLNLSLFNIDRIGNEFIQLGIIQEYSLSFYSSKVSQFDQEKYYYWNSEVLATQESNGNAGNRKKKSYGELTHSDNEHEEKSNVSSIKTSISDWIRKVSQHDNDDCDAAGSTDMNKNEWKSLKQQLESSQDIFFSKCCQLEYSKVQLEKTIYDYCKNYSKMEDGIKRALESSNMMFQQKCEKFTDSPVCSLQEAQLPQETANADVRGFFLRDNGIPFRRWNILEASDPVDACKEISIKSEKFFCGSEINNELAALDTLGAIKIILRQIEKEPNANKVIQSWHRDIDFVRVSNLKRDLLGEFKGSKTTENTNSIITAHFFENSHSYVTNDLVGLIKLWLLELPDSLIPSNHYDDLIKAEKSLTSLCEQFPTSSLRFLQELANHFQLINSKYSLPPQTIQDLFRDNSDIDIPLAHHFVRRTGLQNPIDIKILSPTLSTFFINERTVETLQTLIANRITTATTATLTEPPTIIIKDTTAPIHSTPKPPPNDKDGHFIPRPFKTSSTPTTPERPKRKSGLFLPINVNDVPST</sequence>
<proteinExistence type="evidence at protein level"/>